<gene>
    <name evidence="1" type="primary">pyrI</name>
    <name type="ordered locus">BWG_3952</name>
</gene>
<dbReference type="EMBL" id="CP001396">
    <property type="protein sequence ID" value="ACR62023.1"/>
    <property type="molecule type" value="Genomic_DNA"/>
</dbReference>
<dbReference type="RefSeq" id="WP_000148581.1">
    <property type="nucleotide sequence ID" value="NC_012759.1"/>
</dbReference>
<dbReference type="SMR" id="C4ZRB7"/>
<dbReference type="GeneID" id="93777580"/>
<dbReference type="KEGG" id="ebw:BWG_3952"/>
<dbReference type="HOGENOM" id="CLU_128576_0_0_6"/>
<dbReference type="GO" id="GO:0009347">
    <property type="term" value="C:aspartate carbamoyltransferase complex"/>
    <property type="evidence" value="ECO:0007669"/>
    <property type="project" value="InterPro"/>
</dbReference>
<dbReference type="GO" id="GO:0046872">
    <property type="term" value="F:metal ion binding"/>
    <property type="evidence" value="ECO:0007669"/>
    <property type="project" value="UniProtKB-KW"/>
</dbReference>
<dbReference type="GO" id="GO:0006207">
    <property type="term" value="P:'de novo' pyrimidine nucleobase biosynthetic process"/>
    <property type="evidence" value="ECO:0007669"/>
    <property type="project" value="InterPro"/>
</dbReference>
<dbReference type="GO" id="GO:0006221">
    <property type="term" value="P:pyrimidine nucleotide biosynthetic process"/>
    <property type="evidence" value="ECO:0007669"/>
    <property type="project" value="UniProtKB-UniRule"/>
</dbReference>
<dbReference type="FunFam" id="2.30.30.20:FF:000001">
    <property type="entry name" value="Aspartate carbamoyltransferase regulatory chain"/>
    <property type="match status" value="1"/>
</dbReference>
<dbReference type="FunFam" id="3.30.70.140:FF:000001">
    <property type="entry name" value="Aspartate carbamoyltransferase regulatory chain"/>
    <property type="match status" value="1"/>
</dbReference>
<dbReference type="Gene3D" id="2.30.30.20">
    <property type="entry name" value="Aspartate carbamoyltransferase regulatory subunit, C-terminal domain"/>
    <property type="match status" value="1"/>
</dbReference>
<dbReference type="Gene3D" id="3.30.70.140">
    <property type="entry name" value="Aspartate carbamoyltransferase regulatory subunit, N-terminal domain"/>
    <property type="match status" value="1"/>
</dbReference>
<dbReference type="HAMAP" id="MF_00002">
    <property type="entry name" value="Asp_carb_tr_reg"/>
    <property type="match status" value="1"/>
</dbReference>
<dbReference type="InterPro" id="IPR020545">
    <property type="entry name" value="Asp_carbamoyltransf_reg_N"/>
</dbReference>
<dbReference type="InterPro" id="IPR002801">
    <property type="entry name" value="Asp_carbamoylTrfase_reg"/>
</dbReference>
<dbReference type="InterPro" id="IPR020542">
    <property type="entry name" value="Asp_carbamoyltrfase_reg_C"/>
</dbReference>
<dbReference type="InterPro" id="IPR036792">
    <property type="entry name" value="Asp_carbatrfase_reg_C_sf"/>
</dbReference>
<dbReference type="InterPro" id="IPR036793">
    <property type="entry name" value="Asp_carbatrfase_reg_N_sf"/>
</dbReference>
<dbReference type="NCBIfam" id="TIGR00240">
    <property type="entry name" value="ATCase_reg"/>
    <property type="match status" value="1"/>
</dbReference>
<dbReference type="PANTHER" id="PTHR35805">
    <property type="entry name" value="ASPARTATE CARBAMOYLTRANSFERASE REGULATORY CHAIN"/>
    <property type="match status" value="1"/>
</dbReference>
<dbReference type="PANTHER" id="PTHR35805:SF1">
    <property type="entry name" value="ASPARTATE CARBAMOYLTRANSFERASE REGULATORY CHAIN"/>
    <property type="match status" value="1"/>
</dbReference>
<dbReference type="Pfam" id="PF01948">
    <property type="entry name" value="PyrI"/>
    <property type="match status" value="1"/>
</dbReference>
<dbReference type="Pfam" id="PF02748">
    <property type="entry name" value="PyrI_C"/>
    <property type="match status" value="1"/>
</dbReference>
<dbReference type="SUPFAM" id="SSF57825">
    <property type="entry name" value="Aspartate carbamoyltransferase, Regulatory-chain, C-terminal domain"/>
    <property type="match status" value="1"/>
</dbReference>
<dbReference type="SUPFAM" id="SSF54893">
    <property type="entry name" value="Aspartate carbamoyltransferase, Regulatory-chain, N-terminal domain"/>
    <property type="match status" value="1"/>
</dbReference>
<comment type="function">
    <text evidence="1">Involved in allosteric regulation of aspartate carbamoyltransferase.</text>
</comment>
<comment type="cofactor">
    <cofactor evidence="1">
        <name>Zn(2+)</name>
        <dbReference type="ChEBI" id="CHEBI:29105"/>
    </cofactor>
    <text evidence="1">Binds 1 zinc ion per subunit.</text>
</comment>
<comment type="subunit">
    <text evidence="1">Contains catalytic and regulatory chains.</text>
</comment>
<comment type="similarity">
    <text evidence="1">Belongs to the PyrI family.</text>
</comment>
<sequence>MTHDNKLQVEAIKRGTVIDHIPAQIGFKLLSLFKLTETDQRITIGLNLPSGEMGRKDLIKIENTFLSEDQVDQLALYAPQATVNRIDNYEVVGKSRPSLPERIDNVLVCPNSNCISHAEPVSSSFAVRKRANDIALKCKYCEKEFSHNVVLAN</sequence>
<keyword id="KW-0479">Metal-binding</keyword>
<keyword id="KW-0665">Pyrimidine biosynthesis</keyword>
<keyword id="KW-0862">Zinc</keyword>
<organism>
    <name type="scientific">Escherichia coli (strain K12 / MC4100 / BW2952)</name>
    <dbReference type="NCBI Taxonomy" id="595496"/>
    <lineage>
        <taxon>Bacteria</taxon>
        <taxon>Pseudomonadati</taxon>
        <taxon>Pseudomonadota</taxon>
        <taxon>Gammaproteobacteria</taxon>
        <taxon>Enterobacterales</taxon>
        <taxon>Enterobacteriaceae</taxon>
        <taxon>Escherichia</taxon>
    </lineage>
</organism>
<protein>
    <recommendedName>
        <fullName evidence="1">Aspartate carbamoyltransferase regulatory chain</fullName>
    </recommendedName>
</protein>
<proteinExistence type="inferred from homology"/>
<evidence type="ECO:0000255" key="1">
    <source>
        <dbReference type="HAMAP-Rule" id="MF_00002"/>
    </source>
</evidence>
<name>PYRI_ECOBW</name>
<reference key="1">
    <citation type="journal article" date="2009" name="J. Bacteriol.">
        <title>Genomic sequencing reveals regulatory mutations and recombinational events in the widely used MC4100 lineage of Escherichia coli K-12.</title>
        <authorList>
            <person name="Ferenci T."/>
            <person name="Zhou Z."/>
            <person name="Betteridge T."/>
            <person name="Ren Y."/>
            <person name="Liu Y."/>
            <person name="Feng L."/>
            <person name="Reeves P.R."/>
            <person name="Wang L."/>
        </authorList>
    </citation>
    <scope>NUCLEOTIDE SEQUENCE [LARGE SCALE GENOMIC DNA]</scope>
    <source>
        <strain>K12 / MC4100 / BW2952</strain>
    </source>
</reference>
<feature type="chain" id="PRO_1000201611" description="Aspartate carbamoyltransferase regulatory chain">
    <location>
        <begin position="1"/>
        <end position="153"/>
    </location>
</feature>
<feature type="binding site" evidence="1">
    <location>
        <position position="109"/>
    </location>
    <ligand>
        <name>Zn(2+)</name>
        <dbReference type="ChEBI" id="CHEBI:29105"/>
    </ligand>
</feature>
<feature type="binding site" evidence="1">
    <location>
        <position position="114"/>
    </location>
    <ligand>
        <name>Zn(2+)</name>
        <dbReference type="ChEBI" id="CHEBI:29105"/>
    </ligand>
</feature>
<feature type="binding site" evidence="1">
    <location>
        <position position="138"/>
    </location>
    <ligand>
        <name>Zn(2+)</name>
        <dbReference type="ChEBI" id="CHEBI:29105"/>
    </ligand>
</feature>
<feature type="binding site" evidence="1">
    <location>
        <position position="141"/>
    </location>
    <ligand>
        <name>Zn(2+)</name>
        <dbReference type="ChEBI" id="CHEBI:29105"/>
    </ligand>
</feature>
<accession>C4ZRB7</accession>